<organism>
    <name type="scientific">Anaeromyxobacter dehalogenans (strain 2CP-1 / ATCC BAA-258)</name>
    <dbReference type="NCBI Taxonomy" id="455488"/>
    <lineage>
        <taxon>Bacteria</taxon>
        <taxon>Pseudomonadati</taxon>
        <taxon>Myxococcota</taxon>
        <taxon>Myxococcia</taxon>
        <taxon>Myxococcales</taxon>
        <taxon>Cystobacterineae</taxon>
        <taxon>Anaeromyxobacteraceae</taxon>
        <taxon>Anaeromyxobacter</taxon>
    </lineage>
</organism>
<protein>
    <recommendedName>
        <fullName evidence="1">ATP phosphoribosyltransferase</fullName>
        <shortName evidence="1">ATP-PRT</shortName>
        <shortName evidence="1">ATP-PRTase</shortName>
        <ecNumber evidence="1">2.4.2.17</ecNumber>
    </recommendedName>
</protein>
<reference key="1">
    <citation type="submission" date="2009-01" db="EMBL/GenBank/DDBJ databases">
        <title>Complete sequence of Anaeromyxobacter dehalogenans 2CP-1.</title>
        <authorList>
            <person name="Lucas S."/>
            <person name="Copeland A."/>
            <person name="Lapidus A."/>
            <person name="Glavina del Rio T."/>
            <person name="Dalin E."/>
            <person name="Tice H."/>
            <person name="Bruce D."/>
            <person name="Goodwin L."/>
            <person name="Pitluck S."/>
            <person name="Saunders E."/>
            <person name="Brettin T."/>
            <person name="Detter J.C."/>
            <person name="Han C."/>
            <person name="Larimer F."/>
            <person name="Land M."/>
            <person name="Hauser L."/>
            <person name="Kyrpides N."/>
            <person name="Ovchinnikova G."/>
            <person name="Beliaev A.S."/>
            <person name="Richardson P."/>
        </authorList>
    </citation>
    <scope>NUCLEOTIDE SEQUENCE [LARGE SCALE GENOMIC DNA]</scope>
    <source>
        <strain>2CP-1 / ATCC BAA-258</strain>
    </source>
</reference>
<evidence type="ECO:0000255" key="1">
    <source>
        <dbReference type="HAMAP-Rule" id="MF_01018"/>
    </source>
</evidence>
<comment type="function">
    <text evidence="1">Catalyzes the condensation of ATP and 5-phosphoribose 1-diphosphate to form N'-(5'-phosphoribosyl)-ATP (PR-ATP). Has a crucial role in the pathway because the rate of histidine biosynthesis seems to be controlled primarily by regulation of HisG enzymatic activity.</text>
</comment>
<comment type="catalytic activity">
    <reaction evidence="1">
        <text>1-(5-phospho-beta-D-ribosyl)-ATP + diphosphate = 5-phospho-alpha-D-ribose 1-diphosphate + ATP</text>
        <dbReference type="Rhea" id="RHEA:18473"/>
        <dbReference type="ChEBI" id="CHEBI:30616"/>
        <dbReference type="ChEBI" id="CHEBI:33019"/>
        <dbReference type="ChEBI" id="CHEBI:58017"/>
        <dbReference type="ChEBI" id="CHEBI:73183"/>
        <dbReference type="EC" id="2.4.2.17"/>
    </reaction>
</comment>
<comment type="pathway">
    <text evidence="1">Amino-acid biosynthesis; L-histidine biosynthesis; L-histidine from 5-phospho-alpha-D-ribose 1-diphosphate: step 1/9.</text>
</comment>
<comment type="subunit">
    <text evidence="1">Heteromultimer composed of HisG and HisZ subunits.</text>
</comment>
<comment type="subcellular location">
    <subcellularLocation>
        <location evidence="1">Cytoplasm</location>
    </subcellularLocation>
</comment>
<comment type="domain">
    <text>Lacks the C-terminal regulatory region which is replaced by HisZ.</text>
</comment>
<comment type="similarity">
    <text evidence="1">Belongs to the ATP phosphoribosyltransferase family. Short subfamily.</text>
</comment>
<dbReference type="EC" id="2.4.2.17" evidence="1"/>
<dbReference type="EMBL" id="CP001359">
    <property type="protein sequence ID" value="ACL63750.1"/>
    <property type="molecule type" value="Genomic_DNA"/>
</dbReference>
<dbReference type="RefSeq" id="WP_012631804.1">
    <property type="nucleotide sequence ID" value="NC_011891.1"/>
</dbReference>
<dbReference type="SMR" id="B8JAT9"/>
<dbReference type="KEGG" id="acp:A2cp1_0393"/>
<dbReference type="HOGENOM" id="CLU_038115_2_0_7"/>
<dbReference type="UniPathway" id="UPA00031">
    <property type="reaction ID" value="UER00006"/>
</dbReference>
<dbReference type="Proteomes" id="UP000007089">
    <property type="component" value="Chromosome"/>
</dbReference>
<dbReference type="GO" id="GO:0005737">
    <property type="term" value="C:cytoplasm"/>
    <property type="evidence" value="ECO:0007669"/>
    <property type="project" value="UniProtKB-SubCell"/>
</dbReference>
<dbReference type="GO" id="GO:0005524">
    <property type="term" value="F:ATP binding"/>
    <property type="evidence" value="ECO:0007669"/>
    <property type="project" value="UniProtKB-KW"/>
</dbReference>
<dbReference type="GO" id="GO:0003879">
    <property type="term" value="F:ATP phosphoribosyltransferase activity"/>
    <property type="evidence" value="ECO:0007669"/>
    <property type="project" value="UniProtKB-UniRule"/>
</dbReference>
<dbReference type="GO" id="GO:0000105">
    <property type="term" value="P:L-histidine biosynthetic process"/>
    <property type="evidence" value="ECO:0007669"/>
    <property type="project" value="UniProtKB-UniRule"/>
</dbReference>
<dbReference type="CDD" id="cd13595">
    <property type="entry name" value="PBP2_HisGs"/>
    <property type="match status" value="1"/>
</dbReference>
<dbReference type="Gene3D" id="3.40.190.10">
    <property type="entry name" value="Periplasmic binding protein-like II"/>
    <property type="match status" value="2"/>
</dbReference>
<dbReference type="HAMAP" id="MF_01018">
    <property type="entry name" value="HisG_Short"/>
    <property type="match status" value="1"/>
</dbReference>
<dbReference type="InterPro" id="IPR013820">
    <property type="entry name" value="ATP_PRibTrfase_cat"/>
</dbReference>
<dbReference type="InterPro" id="IPR018198">
    <property type="entry name" value="ATP_PRibTrfase_CS"/>
</dbReference>
<dbReference type="InterPro" id="IPR001348">
    <property type="entry name" value="ATP_PRibTrfase_HisG"/>
</dbReference>
<dbReference type="InterPro" id="IPR024893">
    <property type="entry name" value="ATP_PRibTrfase_HisG_short"/>
</dbReference>
<dbReference type="NCBIfam" id="TIGR00070">
    <property type="entry name" value="hisG"/>
    <property type="match status" value="1"/>
</dbReference>
<dbReference type="PANTHER" id="PTHR21403:SF8">
    <property type="entry name" value="ATP PHOSPHORIBOSYLTRANSFERASE"/>
    <property type="match status" value="1"/>
</dbReference>
<dbReference type="PANTHER" id="PTHR21403">
    <property type="entry name" value="ATP PHOSPHORIBOSYLTRANSFERASE ATP-PRTASE"/>
    <property type="match status" value="1"/>
</dbReference>
<dbReference type="Pfam" id="PF01634">
    <property type="entry name" value="HisG"/>
    <property type="match status" value="1"/>
</dbReference>
<dbReference type="SUPFAM" id="SSF53850">
    <property type="entry name" value="Periplasmic binding protein-like II"/>
    <property type="match status" value="1"/>
</dbReference>
<dbReference type="PROSITE" id="PS01316">
    <property type="entry name" value="ATP_P_PHORIBOSYLTR"/>
    <property type="match status" value="1"/>
</dbReference>
<name>HIS1_ANAD2</name>
<feature type="chain" id="PRO_1000213249" description="ATP phosphoribosyltransferase">
    <location>
        <begin position="1"/>
        <end position="221"/>
    </location>
</feature>
<sequence>MPGTSELITVAVPKGRLLQESSALFERALGVSPRKLLEGTRKLAADAPEAGLRFISIRAGDVASYVEHGAAEVGIVGLDVLREEPRDLYEPLDLGIGRCTVIVARPKGARPLPRGVAPRVATKYLSLAARHFAAKGVPAEIIPLHGSIEVAPSLGLADTIVDITETGETLRANGLVIEEKVLEVSARLVVNRVALKLHPERLRRLIEALRAAVAEAGAEAR</sequence>
<accession>B8JAT9</accession>
<keyword id="KW-0028">Amino-acid biosynthesis</keyword>
<keyword id="KW-0067">ATP-binding</keyword>
<keyword id="KW-0963">Cytoplasm</keyword>
<keyword id="KW-0328">Glycosyltransferase</keyword>
<keyword id="KW-0368">Histidine biosynthesis</keyword>
<keyword id="KW-0547">Nucleotide-binding</keyword>
<keyword id="KW-0808">Transferase</keyword>
<gene>
    <name evidence="1" type="primary">hisG</name>
    <name type="ordered locus">A2cp1_0393</name>
</gene>
<proteinExistence type="inferred from homology"/>